<feature type="chain" id="PRO_0000069626" description="Probable G-protein coupled receptor 149">
    <location>
        <begin position="1"/>
        <end position="731"/>
    </location>
</feature>
<feature type="topological domain" description="Extracellular" evidence="1">
    <location>
        <begin position="1"/>
        <end position="35"/>
    </location>
</feature>
<feature type="transmembrane region" description="Helical; Name=1" evidence="1">
    <location>
        <begin position="36"/>
        <end position="56"/>
    </location>
</feature>
<feature type="topological domain" description="Cytoplasmic" evidence="1">
    <location>
        <begin position="57"/>
        <end position="69"/>
    </location>
</feature>
<feature type="transmembrane region" description="Helical; Name=2" evidence="1">
    <location>
        <begin position="70"/>
        <end position="90"/>
    </location>
</feature>
<feature type="topological domain" description="Extracellular" evidence="1">
    <location>
        <begin position="91"/>
        <end position="109"/>
    </location>
</feature>
<feature type="transmembrane region" description="Helical; Name=3" evidence="1">
    <location>
        <begin position="110"/>
        <end position="132"/>
    </location>
</feature>
<feature type="topological domain" description="Cytoplasmic" evidence="1">
    <location>
        <begin position="133"/>
        <end position="155"/>
    </location>
</feature>
<feature type="transmembrane region" description="Helical; Name=4" evidence="1">
    <location>
        <begin position="156"/>
        <end position="176"/>
    </location>
</feature>
<feature type="topological domain" description="Extracellular" evidence="1">
    <location>
        <begin position="177"/>
        <end position="189"/>
    </location>
</feature>
<feature type="transmembrane region" description="Helical; Name=5" evidence="1">
    <location>
        <begin position="190"/>
        <end position="210"/>
    </location>
</feature>
<feature type="topological domain" description="Cytoplasmic" evidence="1">
    <location>
        <begin position="211"/>
        <end position="310"/>
    </location>
</feature>
<feature type="transmembrane region" description="Helical; Name=6" evidence="1">
    <location>
        <begin position="311"/>
        <end position="331"/>
    </location>
</feature>
<feature type="topological domain" description="Extracellular" evidence="1">
    <location>
        <begin position="332"/>
        <end position="342"/>
    </location>
</feature>
<feature type="transmembrane region" description="Helical; Name=7" evidence="1">
    <location>
        <begin position="343"/>
        <end position="363"/>
    </location>
</feature>
<feature type="topological domain" description="Cytoplasmic" evidence="1">
    <location>
        <begin position="364"/>
        <end position="731"/>
    </location>
</feature>
<feature type="region of interest" description="Disordered" evidence="3">
    <location>
        <begin position="234"/>
        <end position="271"/>
    </location>
</feature>
<feature type="region of interest" description="Disordered" evidence="3">
    <location>
        <begin position="475"/>
        <end position="526"/>
    </location>
</feature>
<feature type="compositionally biased region" description="Basic and acidic residues" evidence="3">
    <location>
        <begin position="479"/>
        <end position="497"/>
    </location>
</feature>
<feature type="compositionally biased region" description="Basic and acidic residues" evidence="3">
    <location>
        <begin position="510"/>
        <end position="526"/>
    </location>
</feature>
<feature type="glycosylation site" description="N-linked (GlcNAc...) asparagine" evidence="1">
    <location>
        <position position="7"/>
    </location>
</feature>
<feature type="glycosylation site" description="N-linked (GlcNAc...) asparagine" evidence="1">
    <location>
        <position position="11"/>
    </location>
</feature>
<feature type="glycosylation site" description="N-linked (GlcNAc...) asparagine" evidence="1">
    <location>
        <position position="21"/>
    </location>
</feature>
<feature type="disulfide bond" evidence="2">
    <location>
        <begin position="105"/>
        <end position="182"/>
    </location>
</feature>
<accession>Q86SP6</accession>
<gene>
    <name type="primary">GPR149</name>
    <name type="synonym">PGR10</name>
</gene>
<evidence type="ECO:0000255" key="1"/>
<evidence type="ECO:0000255" key="2">
    <source>
        <dbReference type="PROSITE-ProRule" id="PRU00521"/>
    </source>
</evidence>
<evidence type="ECO:0000256" key="3">
    <source>
        <dbReference type="SAM" id="MobiDB-lite"/>
    </source>
</evidence>
<dbReference type="EMBL" id="AC092946">
    <property type="status" value="NOT_ANNOTATED_CDS"/>
    <property type="molecule type" value="Genomic_DNA"/>
</dbReference>
<dbReference type="EMBL" id="AY255534">
    <property type="protein sequence ID" value="AAO85046.1"/>
    <property type="molecule type" value="mRNA"/>
</dbReference>
<dbReference type="CCDS" id="CCDS43162.1"/>
<dbReference type="RefSeq" id="NP_001033794.1">
    <property type="nucleotide sequence ID" value="NM_001038705.3"/>
</dbReference>
<dbReference type="BioGRID" id="131320">
    <property type="interactions" value="1"/>
</dbReference>
<dbReference type="FunCoup" id="Q86SP6">
    <property type="interactions" value="267"/>
</dbReference>
<dbReference type="STRING" id="9606.ENSP00000374390"/>
<dbReference type="ChEMBL" id="CHEMBL4523883"/>
<dbReference type="GlyCosmos" id="Q86SP6">
    <property type="glycosylation" value="3 sites, No reported glycans"/>
</dbReference>
<dbReference type="GlyGen" id="Q86SP6">
    <property type="glycosylation" value="4 sites"/>
</dbReference>
<dbReference type="iPTMnet" id="Q86SP6"/>
<dbReference type="PhosphoSitePlus" id="Q86SP6"/>
<dbReference type="BioMuta" id="GPR149"/>
<dbReference type="DMDM" id="84029267"/>
<dbReference type="MassIVE" id="Q86SP6"/>
<dbReference type="PaxDb" id="9606-ENSP00000374390"/>
<dbReference type="PeptideAtlas" id="Q86SP6"/>
<dbReference type="Antibodypedia" id="9095">
    <property type="antibodies" value="201 antibodies from 29 providers"/>
</dbReference>
<dbReference type="DNASU" id="344758"/>
<dbReference type="Ensembl" id="ENST00000389740.3">
    <property type="protein sequence ID" value="ENSP00000374390.2"/>
    <property type="gene ID" value="ENSG00000174948.6"/>
</dbReference>
<dbReference type="GeneID" id="344758"/>
<dbReference type="KEGG" id="hsa:344758"/>
<dbReference type="MANE-Select" id="ENST00000389740.3">
    <property type="protein sequence ID" value="ENSP00000374390.2"/>
    <property type="RefSeq nucleotide sequence ID" value="NM_001038705.3"/>
    <property type="RefSeq protein sequence ID" value="NP_001033794.1"/>
</dbReference>
<dbReference type="UCSC" id="uc003faa.3">
    <property type="organism name" value="human"/>
</dbReference>
<dbReference type="AGR" id="HGNC:23627"/>
<dbReference type="CTD" id="344758"/>
<dbReference type="DisGeNET" id="344758"/>
<dbReference type="GeneCards" id="GPR149"/>
<dbReference type="HGNC" id="HGNC:23627">
    <property type="gene designation" value="GPR149"/>
</dbReference>
<dbReference type="HPA" id="ENSG00000174948">
    <property type="expression patterns" value="Tissue enhanced (brain, seminal vesicle)"/>
</dbReference>
<dbReference type="neXtProt" id="NX_Q86SP6"/>
<dbReference type="OpenTargets" id="ENSG00000174948"/>
<dbReference type="PharmGKB" id="PA134981369"/>
<dbReference type="VEuPathDB" id="HostDB:ENSG00000174948"/>
<dbReference type="eggNOG" id="KOG0331">
    <property type="taxonomic scope" value="Eukaryota"/>
</dbReference>
<dbReference type="GeneTree" id="ENSGT00390000003715"/>
<dbReference type="HOGENOM" id="CLU_021967_0_0_1"/>
<dbReference type="InParanoid" id="Q86SP6"/>
<dbReference type="OMA" id="TKVVLWL"/>
<dbReference type="OrthoDB" id="9944911at2759"/>
<dbReference type="PAN-GO" id="Q86SP6">
    <property type="GO annotations" value="5 GO annotations based on evolutionary models"/>
</dbReference>
<dbReference type="PhylomeDB" id="Q86SP6"/>
<dbReference type="TreeFam" id="TF331679"/>
<dbReference type="PathwayCommons" id="Q86SP6"/>
<dbReference type="SignaLink" id="Q86SP6"/>
<dbReference type="BioGRID-ORCS" id="344758">
    <property type="hits" value="7 hits in 1136 CRISPR screens"/>
</dbReference>
<dbReference type="GenomeRNAi" id="344758"/>
<dbReference type="Pharos" id="Q86SP6">
    <property type="development level" value="Tbio"/>
</dbReference>
<dbReference type="PRO" id="PR:Q86SP6"/>
<dbReference type="Proteomes" id="UP000005640">
    <property type="component" value="Chromosome 3"/>
</dbReference>
<dbReference type="RNAct" id="Q86SP6">
    <property type="molecule type" value="protein"/>
</dbReference>
<dbReference type="Bgee" id="ENSG00000174948">
    <property type="expression patterns" value="Expressed in male germ line stem cell (sensu Vertebrata) in testis and 18 other cell types or tissues"/>
</dbReference>
<dbReference type="ExpressionAtlas" id="Q86SP6">
    <property type="expression patterns" value="baseline and differential"/>
</dbReference>
<dbReference type="GO" id="GO:0043005">
    <property type="term" value="C:neuron projection"/>
    <property type="evidence" value="ECO:0000318"/>
    <property type="project" value="GO_Central"/>
</dbReference>
<dbReference type="GO" id="GO:0005886">
    <property type="term" value="C:plasma membrane"/>
    <property type="evidence" value="ECO:0000318"/>
    <property type="project" value="GO_Central"/>
</dbReference>
<dbReference type="GO" id="GO:0004930">
    <property type="term" value="F:G protein-coupled receptor activity"/>
    <property type="evidence" value="ECO:0000318"/>
    <property type="project" value="GO_Central"/>
</dbReference>
<dbReference type="GO" id="GO:0042923">
    <property type="term" value="F:neuropeptide binding"/>
    <property type="evidence" value="ECO:0000318"/>
    <property type="project" value="GO_Central"/>
</dbReference>
<dbReference type="GO" id="GO:0001547">
    <property type="term" value="P:antral ovarian follicle growth"/>
    <property type="evidence" value="ECO:0007669"/>
    <property type="project" value="Ensembl"/>
</dbReference>
<dbReference type="GO" id="GO:0060280">
    <property type="term" value="P:negative regulation of ovulation"/>
    <property type="evidence" value="ECO:0007669"/>
    <property type="project" value="Ensembl"/>
</dbReference>
<dbReference type="GO" id="GO:0007218">
    <property type="term" value="P:neuropeptide signaling pathway"/>
    <property type="evidence" value="ECO:0000318"/>
    <property type="project" value="GO_Central"/>
</dbReference>
<dbReference type="GO" id="GO:0001546">
    <property type="term" value="P:preantral ovarian follicle growth"/>
    <property type="evidence" value="ECO:0007669"/>
    <property type="project" value="Ensembl"/>
</dbReference>
<dbReference type="CDD" id="cd15011">
    <property type="entry name" value="7tmA_GPR149"/>
    <property type="match status" value="1"/>
</dbReference>
<dbReference type="Gene3D" id="1.20.1070.10">
    <property type="entry name" value="Rhodopsin 7-helix transmembrane proteins"/>
    <property type="match status" value="1"/>
</dbReference>
<dbReference type="InterPro" id="IPR017452">
    <property type="entry name" value="GPCR_Rhodpsn_7TM"/>
</dbReference>
<dbReference type="PANTHER" id="PTHR24229:SF32">
    <property type="entry name" value="G-PROTEIN COUPLED RECEPTOR 149-RELATED"/>
    <property type="match status" value="1"/>
</dbReference>
<dbReference type="PANTHER" id="PTHR24229">
    <property type="entry name" value="NEUROPEPTIDES RECEPTOR"/>
    <property type="match status" value="1"/>
</dbReference>
<dbReference type="SUPFAM" id="SSF81321">
    <property type="entry name" value="Family A G protein-coupled receptor-like"/>
    <property type="match status" value="1"/>
</dbReference>
<dbReference type="PROSITE" id="PS50262">
    <property type="entry name" value="G_PROTEIN_RECEP_F1_2"/>
    <property type="match status" value="1"/>
</dbReference>
<organism>
    <name type="scientific">Homo sapiens</name>
    <name type="common">Human</name>
    <dbReference type="NCBI Taxonomy" id="9606"/>
    <lineage>
        <taxon>Eukaryota</taxon>
        <taxon>Metazoa</taxon>
        <taxon>Chordata</taxon>
        <taxon>Craniata</taxon>
        <taxon>Vertebrata</taxon>
        <taxon>Euteleostomi</taxon>
        <taxon>Mammalia</taxon>
        <taxon>Eutheria</taxon>
        <taxon>Euarchontoglires</taxon>
        <taxon>Primates</taxon>
        <taxon>Haplorrhini</taxon>
        <taxon>Catarrhini</taxon>
        <taxon>Hominidae</taxon>
        <taxon>Homo</taxon>
    </lineage>
</organism>
<reference key="1">
    <citation type="journal article" date="2006" name="Nature">
        <title>The DNA sequence, annotation and analysis of human chromosome 3.</title>
        <authorList>
            <person name="Muzny D.M."/>
            <person name="Scherer S.E."/>
            <person name="Kaul R."/>
            <person name="Wang J."/>
            <person name="Yu J."/>
            <person name="Sudbrak R."/>
            <person name="Buhay C.J."/>
            <person name="Chen R."/>
            <person name="Cree A."/>
            <person name="Ding Y."/>
            <person name="Dugan-Rocha S."/>
            <person name="Gill R."/>
            <person name="Gunaratne P."/>
            <person name="Harris R.A."/>
            <person name="Hawes A.C."/>
            <person name="Hernandez J."/>
            <person name="Hodgson A.V."/>
            <person name="Hume J."/>
            <person name="Jackson A."/>
            <person name="Khan Z.M."/>
            <person name="Kovar-Smith C."/>
            <person name="Lewis L.R."/>
            <person name="Lozado R.J."/>
            <person name="Metzker M.L."/>
            <person name="Milosavljevic A."/>
            <person name="Miner G.R."/>
            <person name="Morgan M.B."/>
            <person name="Nazareth L.V."/>
            <person name="Scott G."/>
            <person name="Sodergren E."/>
            <person name="Song X.-Z."/>
            <person name="Steffen D."/>
            <person name="Wei S."/>
            <person name="Wheeler D.A."/>
            <person name="Wright M.W."/>
            <person name="Worley K.C."/>
            <person name="Yuan Y."/>
            <person name="Zhang Z."/>
            <person name="Adams C.Q."/>
            <person name="Ansari-Lari M.A."/>
            <person name="Ayele M."/>
            <person name="Brown M.J."/>
            <person name="Chen G."/>
            <person name="Chen Z."/>
            <person name="Clendenning J."/>
            <person name="Clerc-Blankenburg K.P."/>
            <person name="Chen R."/>
            <person name="Chen Z."/>
            <person name="Davis C."/>
            <person name="Delgado O."/>
            <person name="Dinh H.H."/>
            <person name="Dong W."/>
            <person name="Draper H."/>
            <person name="Ernst S."/>
            <person name="Fu G."/>
            <person name="Gonzalez-Garay M.L."/>
            <person name="Garcia D.K."/>
            <person name="Gillett W."/>
            <person name="Gu J."/>
            <person name="Hao B."/>
            <person name="Haugen E."/>
            <person name="Havlak P."/>
            <person name="He X."/>
            <person name="Hennig S."/>
            <person name="Hu S."/>
            <person name="Huang W."/>
            <person name="Jackson L.R."/>
            <person name="Jacob L.S."/>
            <person name="Kelly S.H."/>
            <person name="Kube M."/>
            <person name="Levy R."/>
            <person name="Li Z."/>
            <person name="Liu B."/>
            <person name="Liu J."/>
            <person name="Liu W."/>
            <person name="Lu J."/>
            <person name="Maheshwari M."/>
            <person name="Nguyen B.-V."/>
            <person name="Okwuonu G.O."/>
            <person name="Palmeiri A."/>
            <person name="Pasternak S."/>
            <person name="Perez L.M."/>
            <person name="Phelps K.A."/>
            <person name="Plopper F.J."/>
            <person name="Qiang B."/>
            <person name="Raymond C."/>
            <person name="Rodriguez R."/>
            <person name="Saenphimmachak C."/>
            <person name="Santibanez J."/>
            <person name="Shen H."/>
            <person name="Shen Y."/>
            <person name="Subramanian S."/>
            <person name="Tabor P.E."/>
            <person name="Verduzco D."/>
            <person name="Waldron L."/>
            <person name="Wang J."/>
            <person name="Wang J."/>
            <person name="Wang Q."/>
            <person name="Williams G.A."/>
            <person name="Wong G.K.-S."/>
            <person name="Yao Z."/>
            <person name="Zhang J."/>
            <person name="Zhang X."/>
            <person name="Zhao G."/>
            <person name="Zhou J."/>
            <person name="Zhou Y."/>
            <person name="Nelson D."/>
            <person name="Lehrach H."/>
            <person name="Reinhardt R."/>
            <person name="Naylor S.L."/>
            <person name="Yang H."/>
            <person name="Olson M."/>
            <person name="Weinstock G."/>
            <person name="Gibbs R.A."/>
        </authorList>
    </citation>
    <scope>NUCLEOTIDE SEQUENCE [LARGE SCALE GENOMIC DNA]</scope>
</reference>
<reference key="2">
    <citation type="journal article" date="2003" name="Proc. Natl. Acad. Sci. U.S.A.">
        <title>The G protein-coupled receptor repertoires of human and mouse.</title>
        <authorList>
            <person name="Vassilatis D.K."/>
            <person name="Hohmann J.G."/>
            <person name="Zeng H."/>
            <person name="Li F."/>
            <person name="Ranchalis J.E."/>
            <person name="Mortrud M.T."/>
            <person name="Brown A."/>
            <person name="Rodriguez S.S."/>
            <person name="Weller J.R."/>
            <person name="Wright A.C."/>
            <person name="Bergmann J.E."/>
            <person name="Gaitanaris G.A."/>
        </authorList>
    </citation>
    <scope>NUCLEOTIDE SEQUENCE [MRNA] OF 156-589</scope>
</reference>
<proteinExistence type="evidence at protein level"/>
<protein>
    <recommendedName>
        <fullName>Probable G-protein coupled receptor 149</fullName>
    </recommendedName>
    <alternativeName>
        <fullName>G-protein coupled receptor PGR10</fullName>
    </alternativeName>
</protein>
<sequence>MSLFLSNLSTNDSSLWKENHNSTDLLNPPGTLNIYLFCLTCLMTFAALVGSIYSLISLLKMQNRTVVSMLVASWSVDDLMSVLSVTIFMFLQWPNEVPGYFQFLCTTSALMYLCQGLSSNLKATLLVSYNFYTMHRGVGSQTASRRSGQVLGVVLTVWAASLLLSALPLCGWGAFVRTPWGCLVDCSSSYVLFLSIVYALAFGLLVGLSVPLTHRLLCSEEPPRLHSNYQEISRGASIPGTPPTAGRVVSLSPEDAPGPSLRRSGGCSPSSDTVFGPGAPAAAGAEACRRENRGTLYGTRSFTVSVAQKRFALILALTKVVLWLPMMMHMVVQNVVGFQSLPLETFSFLLTLLATTVTPVFVLSKRWTHLPCGCIINCRQNAYAVASDGKKIKRKGFEFNLSFQKSYGIYKIAHEDYYDDDENSIFYHNLMNSECETTKDPQRDNRNIFNAIKVEISTTPSLDSSTQRGINKCTNTDITEAKQDSNNKKDAFSDKTGGDINYEETTFSEGPERRLSHEESQKPDLSDWEWCRSKSERTPRQRSGYALAIPLCAFQGTVSLHAPTGKTLSLSTYEVSAEGQKITPASKKIEVYRSKSVGHEPNSEDSSSTFVDTSVKIHLEVLEICDNEEALDTVSIISNISQSSTQVRSPSLRYSRKENRFVSCDLGETASYSLFLPTSNPDGDINISIPDTVEAHRQNSKRQHQERDGYQEEIQLLNKAYRKREEESKGS</sequence>
<keyword id="KW-1003">Cell membrane</keyword>
<keyword id="KW-1015">Disulfide bond</keyword>
<keyword id="KW-0297">G-protein coupled receptor</keyword>
<keyword id="KW-0325">Glycoprotein</keyword>
<keyword id="KW-0472">Membrane</keyword>
<keyword id="KW-1267">Proteomics identification</keyword>
<keyword id="KW-0675">Receptor</keyword>
<keyword id="KW-1185">Reference proteome</keyword>
<keyword id="KW-0807">Transducer</keyword>
<keyword id="KW-0812">Transmembrane</keyword>
<keyword id="KW-1133">Transmembrane helix</keyword>
<name>GP149_HUMAN</name>
<comment type="function">
    <text>Orphan receptor.</text>
</comment>
<comment type="subcellular location">
    <subcellularLocation>
        <location>Cell membrane</location>
        <topology>Multi-pass membrane protein</topology>
    </subcellularLocation>
</comment>
<comment type="similarity">
    <text evidence="2">Belongs to the G-protein coupled receptor 1 family.</text>
</comment>